<gene>
    <name evidence="1" type="primary">ureB</name>
    <name type="ordered locus">Mjls_2833</name>
</gene>
<reference key="1">
    <citation type="submission" date="2007-02" db="EMBL/GenBank/DDBJ databases">
        <title>Complete sequence of Mycobacterium sp. JLS.</title>
        <authorList>
            <consortium name="US DOE Joint Genome Institute"/>
            <person name="Copeland A."/>
            <person name="Lucas S."/>
            <person name="Lapidus A."/>
            <person name="Barry K."/>
            <person name="Detter J.C."/>
            <person name="Glavina del Rio T."/>
            <person name="Hammon N."/>
            <person name="Israni S."/>
            <person name="Dalin E."/>
            <person name="Tice H."/>
            <person name="Pitluck S."/>
            <person name="Chain P."/>
            <person name="Malfatti S."/>
            <person name="Shin M."/>
            <person name="Vergez L."/>
            <person name="Schmutz J."/>
            <person name="Larimer F."/>
            <person name="Land M."/>
            <person name="Hauser L."/>
            <person name="Kyrpides N."/>
            <person name="Mikhailova N."/>
            <person name="Miller C.D."/>
            <person name="Anderson A.J."/>
            <person name="Sims R.C."/>
            <person name="Richardson P."/>
        </authorList>
    </citation>
    <scope>NUCLEOTIDE SEQUENCE [LARGE SCALE GENOMIC DNA]</scope>
    <source>
        <strain>JLS</strain>
    </source>
</reference>
<accession>A3Q0D6</accession>
<dbReference type="EC" id="3.5.1.5" evidence="1"/>
<dbReference type="EMBL" id="CP000580">
    <property type="protein sequence ID" value="ABN98613.1"/>
    <property type="molecule type" value="Genomic_DNA"/>
</dbReference>
<dbReference type="SMR" id="A3Q0D6"/>
<dbReference type="KEGG" id="mjl:Mjls_2833"/>
<dbReference type="HOGENOM" id="CLU_129707_1_1_11"/>
<dbReference type="BioCyc" id="MSP164757:G1G8C-2852-MONOMER"/>
<dbReference type="UniPathway" id="UPA00258">
    <property type="reaction ID" value="UER00370"/>
</dbReference>
<dbReference type="GO" id="GO:0035550">
    <property type="term" value="C:urease complex"/>
    <property type="evidence" value="ECO:0007669"/>
    <property type="project" value="InterPro"/>
</dbReference>
<dbReference type="GO" id="GO:0009039">
    <property type="term" value="F:urease activity"/>
    <property type="evidence" value="ECO:0007669"/>
    <property type="project" value="UniProtKB-UniRule"/>
</dbReference>
<dbReference type="GO" id="GO:0043419">
    <property type="term" value="P:urea catabolic process"/>
    <property type="evidence" value="ECO:0007669"/>
    <property type="project" value="UniProtKB-UniRule"/>
</dbReference>
<dbReference type="CDD" id="cd00407">
    <property type="entry name" value="Urease_beta"/>
    <property type="match status" value="1"/>
</dbReference>
<dbReference type="Gene3D" id="2.10.150.10">
    <property type="entry name" value="Urease, beta subunit"/>
    <property type="match status" value="1"/>
</dbReference>
<dbReference type="HAMAP" id="MF_01954">
    <property type="entry name" value="Urease_beta"/>
    <property type="match status" value="1"/>
</dbReference>
<dbReference type="InterPro" id="IPR002019">
    <property type="entry name" value="Urease_beta-like"/>
</dbReference>
<dbReference type="InterPro" id="IPR036461">
    <property type="entry name" value="Urease_betasu_sf"/>
</dbReference>
<dbReference type="InterPro" id="IPR050069">
    <property type="entry name" value="Urease_subunit"/>
</dbReference>
<dbReference type="NCBIfam" id="NF009682">
    <property type="entry name" value="PRK13203.1"/>
    <property type="match status" value="1"/>
</dbReference>
<dbReference type="NCBIfam" id="TIGR00192">
    <property type="entry name" value="urease_beta"/>
    <property type="match status" value="1"/>
</dbReference>
<dbReference type="PANTHER" id="PTHR33569">
    <property type="entry name" value="UREASE"/>
    <property type="match status" value="1"/>
</dbReference>
<dbReference type="PANTHER" id="PTHR33569:SF1">
    <property type="entry name" value="UREASE"/>
    <property type="match status" value="1"/>
</dbReference>
<dbReference type="Pfam" id="PF00699">
    <property type="entry name" value="Urease_beta"/>
    <property type="match status" value="1"/>
</dbReference>
<dbReference type="SUPFAM" id="SSF51278">
    <property type="entry name" value="Urease, beta-subunit"/>
    <property type="match status" value="1"/>
</dbReference>
<name>URE2_MYCSJ</name>
<sequence length="105" mass="11128">MVPGEIFFGEGDVEINAGARRLEMEIVNTGDRPVQVGSHVHLPQANAALDFDRTAARGHRLDVPAGTAVRFEPGVAQRVRLVPLGGSREVHGLSLNPPGRLDGAS</sequence>
<comment type="catalytic activity">
    <reaction evidence="1">
        <text>urea + 2 H2O + H(+) = hydrogencarbonate + 2 NH4(+)</text>
        <dbReference type="Rhea" id="RHEA:20557"/>
        <dbReference type="ChEBI" id="CHEBI:15377"/>
        <dbReference type="ChEBI" id="CHEBI:15378"/>
        <dbReference type="ChEBI" id="CHEBI:16199"/>
        <dbReference type="ChEBI" id="CHEBI:17544"/>
        <dbReference type="ChEBI" id="CHEBI:28938"/>
        <dbReference type="EC" id="3.5.1.5"/>
    </reaction>
</comment>
<comment type="pathway">
    <text evidence="1">Nitrogen metabolism; urea degradation; CO(2) and NH(3) from urea (urease route): step 1/1.</text>
</comment>
<comment type="subunit">
    <text evidence="1">Heterotrimer of UreA (gamma), UreB (beta) and UreC (alpha) subunits. Three heterotrimers associate to form the active enzyme.</text>
</comment>
<comment type="subcellular location">
    <subcellularLocation>
        <location evidence="1">Cytoplasm</location>
    </subcellularLocation>
</comment>
<comment type="similarity">
    <text evidence="1">Belongs to the urease beta subunit family.</text>
</comment>
<protein>
    <recommendedName>
        <fullName evidence="1">Urease subunit beta</fullName>
        <ecNumber evidence="1">3.5.1.5</ecNumber>
    </recommendedName>
    <alternativeName>
        <fullName evidence="1">Urea amidohydrolase subunit beta</fullName>
    </alternativeName>
</protein>
<proteinExistence type="inferred from homology"/>
<organism>
    <name type="scientific">Mycobacterium sp. (strain JLS)</name>
    <dbReference type="NCBI Taxonomy" id="164757"/>
    <lineage>
        <taxon>Bacteria</taxon>
        <taxon>Bacillati</taxon>
        <taxon>Actinomycetota</taxon>
        <taxon>Actinomycetes</taxon>
        <taxon>Mycobacteriales</taxon>
        <taxon>Mycobacteriaceae</taxon>
        <taxon>Mycobacterium</taxon>
    </lineage>
</organism>
<feature type="chain" id="PRO_1000070745" description="Urease subunit beta">
    <location>
        <begin position="1"/>
        <end position="105"/>
    </location>
</feature>
<evidence type="ECO:0000255" key="1">
    <source>
        <dbReference type="HAMAP-Rule" id="MF_01954"/>
    </source>
</evidence>
<keyword id="KW-0963">Cytoplasm</keyword>
<keyword id="KW-0378">Hydrolase</keyword>